<keyword id="KW-0027">Amidation</keyword>
<keyword id="KW-0903">Direct protein sequencing</keyword>
<keyword id="KW-0527">Neuropeptide</keyword>
<keyword id="KW-0964">Secreted</keyword>
<protein>
    <recommendedName>
        <fullName>Pyrokinin</fullName>
        <shortName>Neobu-PK</shortName>
    </recommendedName>
    <alternativeName>
        <fullName>FXPRL-amide</fullName>
    </alternativeName>
</protein>
<feature type="peptide" id="PRO_0000044368" description="Pyrokinin">
    <location>
        <begin position="1"/>
        <end position="15"/>
    </location>
</feature>
<feature type="modified residue" description="Leucine amide" evidence="3">
    <location>
        <position position="15"/>
    </location>
</feature>
<feature type="unsure residue" description="L or I" evidence="3">
    <location>
        <position position="15"/>
    </location>
</feature>
<accession>P84356</accession>
<name>PPK_SARBU</name>
<sequence length="15" mass="1517">AGPSATTGVWFGPRL</sequence>
<evidence type="ECO:0000250" key="1">
    <source>
        <dbReference type="UniProtKB" id="P82617"/>
    </source>
</evidence>
<evidence type="ECO:0000255" key="2"/>
<evidence type="ECO:0000269" key="3">
    <source>
    </source>
</evidence>
<evidence type="ECO:0000305" key="4"/>
<dbReference type="GO" id="GO:0005576">
    <property type="term" value="C:extracellular region"/>
    <property type="evidence" value="ECO:0007669"/>
    <property type="project" value="UniProtKB-SubCell"/>
</dbReference>
<dbReference type="GO" id="GO:0005184">
    <property type="term" value="F:neuropeptide hormone activity"/>
    <property type="evidence" value="ECO:0007669"/>
    <property type="project" value="InterPro"/>
</dbReference>
<dbReference type="GO" id="GO:0007218">
    <property type="term" value="P:neuropeptide signaling pathway"/>
    <property type="evidence" value="ECO:0007669"/>
    <property type="project" value="UniProtKB-KW"/>
</dbReference>
<dbReference type="InterPro" id="IPR001484">
    <property type="entry name" value="Pyrokinin_CS"/>
</dbReference>
<dbReference type="PROSITE" id="PS00539">
    <property type="entry name" value="PYROKININ"/>
    <property type="match status" value="1"/>
</dbReference>
<comment type="function">
    <text evidence="1">Mediates visceral muscle contractile activity (myotropic activity).</text>
</comment>
<comment type="subcellular location">
    <subcellularLocation>
        <location>Secreted</location>
    </subcellularLocation>
</comment>
<comment type="tissue specificity">
    <text evidence="3">Dorsal ganglionic sheath of fused ventral nerve cord.</text>
</comment>
<comment type="mass spectrometry" mass="1515.8" method="MALDI" evidence="3"/>
<comment type="similarity">
    <text evidence="2">Belongs to the pyrokinin family.</text>
</comment>
<proteinExistence type="evidence at protein level"/>
<reference evidence="4" key="1">
    <citation type="journal article" date="2003" name="Peptides">
        <title>Mass spectrometric analysis of putative capa-gene products in Musca domestica and Neobellieria bullata.</title>
        <authorList>
            <person name="Predel R."/>
            <person name="Russell W.K."/>
            <person name="Tichy S.E."/>
            <person name="Russell D.H."/>
            <person name="Nachman R.J."/>
        </authorList>
    </citation>
    <scope>PROTEIN SEQUENCE</scope>
    <scope>TISSUE SPECIFICITY</scope>
    <scope>MASS SPECTROMETRY</scope>
    <scope>AMIDATION AT LEU-15</scope>
    <source>
        <tissue evidence="3">Ganglion</tissue>
    </source>
</reference>
<organism>
    <name type="scientific">Sarcophaga bullata</name>
    <name type="common">Grey flesh fly</name>
    <name type="synonym">Neobellieria bullata</name>
    <dbReference type="NCBI Taxonomy" id="7385"/>
    <lineage>
        <taxon>Eukaryota</taxon>
        <taxon>Metazoa</taxon>
        <taxon>Ecdysozoa</taxon>
        <taxon>Arthropoda</taxon>
        <taxon>Hexapoda</taxon>
        <taxon>Insecta</taxon>
        <taxon>Pterygota</taxon>
        <taxon>Neoptera</taxon>
        <taxon>Endopterygota</taxon>
        <taxon>Diptera</taxon>
        <taxon>Brachycera</taxon>
        <taxon>Muscomorpha</taxon>
        <taxon>Oestroidea</taxon>
        <taxon>Sarcophagidae</taxon>
        <taxon>Sarcophaga</taxon>
        <taxon>Neobellieria</taxon>
    </lineage>
</organism>